<comment type="function">
    <text>Actins are highly conserved proteins that are involved in various types of cell motility and are ubiquitously expressed in all eukaryotic cells.</text>
</comment>
<comment type="function">
    <text>Essential component of cell cytoskeleton; plays an important role in cytoplasmic streaming, cell shape determination, cell division, organelle movement and extension growth.</text>
</comment>
<comment type="catalytic activity">
    <reaction evidence="1">
        <text>ATP + H2O = ADP + phosphate + H(+)</text>
        <dbReference type="Rhea" id="RHEA:13065"/>
        <dbReference type="ChEBI" id="CHEBI:15377"/>
        <dbReference type="ChEBI" id="CHEBI:15378"/>
        <dbReference type="ChEBI" id="CHEBI:30616"/>
        <dbReference type="ChEBI" id="CHEBI:43474"/>
        <dbReference type="ChEBI" id="CHEBI:456216"/>
    </reaction>
</comment>
<comment type="subcellular location">
    <subcellularLocation>
        <location>Cytoplasm</location>
        <location>Cytoskeleton</location>
    </subcellularLocation>
</comment>
<comment type="similarity">
    <text evidence="2">Belongs to the actin family.</text>
</comment>
<evidence type="ECO:0000250" key="1">
    <source>
        <dbReference type="UniProtKB" id="P68137"/>
    </source>
</evidence>
<evidence type="ECO:0000305" key="2"/>
<protein>
    <recommendedName>
        <fullName>Actin</fullName>
        <ecNumber evidence="1">3.6.4.-</ecNumber>
    </recommendedName>
</protein>
<dbReference type="EC" id="3.6.4.-" evidence="1"/>
<dbReference type="EMBL" id="U03676">
    <property type="protein sequence ID" value="AAA97521.1"/>
    <property type="molecule type" value="mRNA"/>
</dbReference>
<dbReference type="EMBL" id="U03677">
    <property type="protein sequence ID" value="AAA18589.1"/>
    <property type="molecule type" value="Unassigned_DNA"/>
</dbReference>
<dbReference type="PIR" id="S57262">
    <property type="entry name" value="S57262"/>
</dbReference>
<dbReference type="RefSeq" id="XP_005717262.1">
    <property type="nucleotide sequence ID" value="XM_005717205.1"/>
</dbReference>
<dbReference type="SMR" id="P53499"/>
<dbReference type="EnsemblPlants" id="CDF37443">
    <property type="protein sequence ID" value="CDF37443"/>
    <property type="gene ID" value="CHC_T00008840001"/>
</dbReference>
<dbReference type="Gramene" id="CDF37443">
    <property type="protein sequence ID" value="CDF37443"/>
    <property type="gene ID" value="CHC_T00008840001"/>
</dbReference>
<dbReference type="KEGG" id="ccp:CHC_T00008840001"/>
<dbReference type="OMA" id="GKEACGI"/>
<dbReference type="OrthoDB" id="5132116at2759"/>
<dbReference type="PhylomeDB" id="P53499"/>
<dbReference type="GO" id="GO:0005737">
    <property type="term" value="C:cytoplasm"/>
    <property type="evidence" value="ECO:0007669"/>
    <property type="project" value="UniProtKB-KW"/>
</dbReference>
<dbReference type="GO" id="GO:0005856">
    <property type="term" value="C:cytoskeleton"/>
    <property type="evidence" value="ECO:0007669"/>
    <property type="project" value="UniProtKB-SubCell"/>
</dbReference>
<dbReference type="GO" id="GO:0005524">
    <property type="term" value="F:ATP binding"/>
    <property type="evidence" value="ECO:0007669"/>
    <property type="project" value="UniProtKB-KW"/>
</dbReference>
<dbReference type="GO" id="GO:0016787">
    <property type="term" value="F:hydrolase activity"/>
    <property type="evidence" value="ECO:0007669"/>
    <property type="project" value="UniProtKB-KW"/>
</dbReference>
<dbReference type="FunFam" id="3.30.420.40:FF:000291">
    <property type="entry name" value="Actin, alpha skeletal muscle"/>
    <property type="match status" value="1"/>
</dbReference>
<dbReference type="FunFam" id="3.90.640.10:FF:000047">
    <property type="entry name" value="Actin, alpha skeletal muscle"/>
    <property type="match status" value="1"/>
</dbReference>
<dbReference type="FunFam" id="3.30.420.40:FF:000404">
    <property type="entry name" value="Major actin"/>
    <property type="match status" value="1"/>
</dbReference>
<dbReference type="FunFam" id="3.30.420.40:FF:000058">
    <property type="entry name" value="Putative actin-related protein 5"/>
    <property type="match status" value="1"/>
</dbReference>
<dbReference type="Gene3D" id="3.30.420.40">
    <property type="match status" value="2"/>
</dbReference>
<dbReference type="Gene3D" id="3.90.640.10">
    <property type="entry name" value="Actin, Chain A, domain 4"/>
    <property type="match status" value="1"/>
</dbReference>
<dbReference type="InterPro" id="IPR004000">
    <property type="entry name" value="Actin"/>
</dbReference>
<dbReference type="InterPro" id="IPR020902">
    <property type="entry name" value="Actin/actin-like_CS"/>
</dbReference>
<dbReference type="InterPro" id="IPR004001">
    <property type="entry name" value="Actin_CS"/>
</dbReference>
<dbReference type="InterPro" id="IPR043129">
    <property type="entry name" value="ATPase_NBD"/>
</dbReference>
<dbReference type="PANTHER" id="PTHR11937">
    <property type="entry name" value="ACTIN"/>
    <property type="match status" value="1"/>
</dbReference>
<dbReference type="Pfam" id="PF00022">
    <property type="entry name" value="Actin"/>
    <property type="match status" value="1"/>
</dbReference>
<dbReference type="PRINTS" id="PR00190">
    <property type="entry name" value="ACTIN"/>
</dbReference>
<dbReference type="SMART" id="SM00268">
    <property type="entry name" value="ACTIN"/>
    <property type="match status" value="1"/>
</dbReference>
<dbReference type="SUPFAM" id="SSF53067">
    <property type="entry name" value="Actin-like ATPase domain"/>
    <property type="match status" value="2"/>
</dbReference>
<dbReference type="PROSITE" id="PS00432">
    <property type="entry name" value="ACTINS_2"/>
    <property type="match status" value="1"/>
</dbReference>
<dbReference type="PROSITE" id="PS01132">
    <property type="entry name" value="ACTINS_ACT_LIKE"/>
    <property type="match status" value="1"/>
</dbReference>
<sequence length="373" mass="41389">MSKPAVVIDNGSGRCKTGIAGEDCPKAVFPAVIGKPKQKGIMVGTGQKDEYVGDAAMARRGVLIIKYPLEHGIVTNWDDMEKIWSHAFYSELRVDPQEHPVLLTEAPLNPKANRERMTQIMFESFNIPAFYVAIQAVLSLYASGRTSGIVLDSGDGVTHTVPIYEGYSLPHAVLRIDLAGRDLTGWMAKLLMQRGYSFTTSAELEIVRDVKQQLCFVAEDYEKELANASSNSSLEKEYELPDGQVITVEAERFQCPEALFKPELLGIEMDGMHLTAFNSIMKTDIDIRKDLYSNIVMSGGTTMFAGIASRVQKEIETLAPPSMKIKVIAPPERQYSVWIGGSILSSLSTFQQMWVSKTEYDEMGPSVVHRKCF</sequence>
<organism>
    <name type="scientific">Chondrus crispus</name>
    <name type="common">Carrageen Irish moss</name>
    <name type="synonym">Polymorpha crispa</name>
    <dbReference type="NCBI Taxonomy" id="2769"/>
    <lineage>
        <taxon>Eukaryota</taxon>
        <taxon>Rhodophyta</taxon>
        <taxon>Florideophyceae</taxon>
        <taxon>Rhodymeniophycidae</taxon>
        <taxon>Gigartinales</taxon>
        <taxon>Gigartinaceae</taxon>
        <taxon>Chondrus</taxon>
    </lineage>
</organism>
<gene>
    <name type="primary">AC</name>
</gene>
<proteinExistence type="evidence at transcript level"/>
<name>ACT_CHOCR</name>
<feature type="chain" id="PRO_0000088910" description="Actin">
    <location>
        <begin position="1"/>
        <end position="373"/>
    </location>
</feature>
<accession>P53499</accession>
<keyword id="KW-0067">ATP-binding</keyword>
<keyword id="KW-0963">Cytoplasm</keyword>
<keyword id="KW-0206">Cytoskeleton</keyword>
<keyword id="KW-0378">Hydrolase</keyword>
<keyword id="KW-0547">Nucleotide-binding</keyword>
<reference key="1">
    <citation type="journal article" date="1995" name="Curr. Genet.">
        <title>Structural features and phylogeny of the actin gene of Chondrus crispus (Gigartinales, Rhodophyta).</title>
        <authorList>
            <person name="Bouget F.F."/>
            <person name="Kerbourc'H C."/>
            <person name="Liaud M.-F."/>
            <person name="Loiseaux-De Goer S."/>
            <person name="Quatrano R.S."/>
            <person name="Cerff R."/>
            <person name="Kloareg B."/>
        </authorList>
    </citation>
    <scope>NUCLEOTIDE SEQUENCE [MRNA]</scope>
    <source>
        <strain>Stackhouse</strain>
    </source>
</reference>